<gene>
    <name evidence="1" type="primary">argC</name>
    <name type="ordered locus">Minf_2363</name>
</gene>
<name>ARGC_METI4</name>
<evidence type="ECO:0000255" key="1">
    <source>
        <dbReference type="HAMAP-Rule" id="MF_00150"/>
    </source>
</evidence>
<comment type="function">
    <text evidence="1">Catalyzes the NADPH-dependent reduction of N-acetyl-5-glutamyl phosphate to yield N-acetyl-L-glutamate 5-semialdehyde.</text>
</comment>
<comment type="catalytic activity">
    <reaction evidence="1">
        <text>N-acetyl-L-glutamate 5-semialdehyde + phosphate + NADP(+) = N-acetyl-L-glutamyl 5-phosphate + NADPH + H(+)</text>
        <dbReference type="Rhea" id="RHEA:21588"/>
        <dbReference type="ChEBI" id="CHEBI:15378"/>
        <dbReference type="ChEBI" id="CHEBI:29123"/>
        <dbReference type="ChEBI" id="CHEBI:43474"/>
        <dbReference type="ChEBI" id="CHEBI:57783"/>
        <dbReference type="ChEBI" id="CHEBI:57936"/>
        <dbReference type="ChEBI" id="CHEBI:58349"/>
        <dbReference type="EC" id="1.2.1.38"/>
    </reaction>
</comment>
<comment type="pathway">
    <text evidence="1">Amino-acid biosynthesis; L-arginine biosynthesis; N(2)-acetyl-L-ornithine from L-glutamate: step 3/4.</text>
</comment>
<comment type="subcellular location">
    <subcellularLocation>
        <location evidence="1">Cytoplasm</location>
    </subcellularLocation>
</comment>
<comment type="similarity">
    <text evidence="1">Belongs to the NAGSA dehydrogenase family. Type 1 subfamily.</text>
</comment>
<accession>B3E0U0</accession>
<dbReference type="EC" id="1.2.1.38" evidence="1"/>
<dbReference type="EMBL" id="CP000975">
    <property type="protein sequence ID" value="ACD84417.1"/>
    <property type="molecule type" value="Genomic_DNA"/>
</dbReference>
<dbReference type="RefSeq" id="WP_012464697.1">
    <property type="nucleotide sequence ID" value="NC_010794.1"/>
</dbReference>
<dbReference type="SMR" id="B3E0U0"/>
<dbReference type="STRING" id="481448.Minf_2363"/>
<dbReference type="KEGG" id="min:Minf_2363"/>
<dbReference type="eggNOG" id="COG0002">
    <property type="taxonomic scope" value="Bacteria"/>
</dbReference>
<dbReference type="HOGENOM" id="CLU_006384_0_1_0"/>
<dbReference type="OrthoDB" id="9801289at2"/>
<dbReference type="UniPathway" id="UPA00068">
    <property type="reaction ID" value="UER00108"/>
</dbReference>
<dbReference type="Proteomes" id="UP000009149">
    <property type="component" value="Chromosome"/>
</dbReference>
<dbReference type="GO" id="GO:0005737">
    <property type="term" value="C:cytoplasm"/>
    <property type="evidence" value="ECO:0007669"/>
    <property type="project" value="UniProtKB-SubCell"/>
</dbReference>
<dbReference type="GO" id="GO:0003942">
    <property type="term" value="F:N-acetyl-gamma-glutamyl-phosphate reductase activity"/>
    <property type="evidence" value="ECO:0007669"/>
    <property type="project" value="UniProtKB-UniRule"/>
</dbReference>
<dbReference type="GO" id="GO:0051287">
    <property type="term" value="F:NAD binding"/>
    <property type="evidence" value="ECO:0007669"/>
    <property type="project" value="InterPro"/>
</dbReference>
<dbReference type="GO" id="GO:0070401">
    <property type="term" value="F:NADP+ binding"/>
    <property type="evidence" value="ECO:0007669"/>
    <property type="project" value="InterPro"/>
</dbReference>
<dbReference type="GO" id="GO:0006526">
    <property type="term" value="P:L-arginine biosynthetic process"/>
    <property type="evidence" value="ECO:0007669"/>
    <property type="project" value="UniProtKB-UniRule"/>
</dbReference>
<dbReference type="CDD" id="cd23934">
    <property type="entry name" value="AGPR_1_C"/>
    <property type="match status" value="1"/>
</dbReference>
<dbReference type="CDD" id="cd17895">
    <property type="entry name" value="AGPR_1_N"/>
    <property type="match status" value="1"/>
</dbReference>
<dbReference type="Gene3D" id="3.30.360.10">
    <property type="entry name" value="Dihydrodipicolinate Reductase, domain 2"/>
    <property type="match status" value="1"/>
</dbReference>
<dbReference type="Gene3D" id="3.40.50.720">
    <property type="entry name" value="NAD(P)-binding Rossmann-like Domain"/>
    <property type="match status" value="1"/>
</dbReference>
<dbReference type="HAMAP" id="MF_00150">
    <property type="entry name" value="ArgC_type1"/>
    <property type="match status" value="1"/>
</dbReference>
<dbReference type="InterPro" id="IPR023013">
    <property type="entry name" value="AGPR_AS"/>
</dbReference>
<dbReference type="InterPro" id="IPR000706">
    <property type="entry name" value="AGPR_type-1"/>
</dbReference>
<dbReference type="InterPro" id="IPR036291">
    <property type="entry name" value="NAD(P)-bd_dom_sf"/>
</dbReference>
<dbReference type="InterPro" id="IPR050085">
    <property type="entry name" value="NAGSA_dehydrogenase"/>
</dbReference>
<dbReference type="InterPro" id="IPR000534">
    <property type="entry name" value="Semialdehyde_DH_NAD-bd"/>
</dbReference>
<dbReference type="NCBIfam" id="TIGR01850">
    <property type="entry name" value="argC"/>
    <property type="match status" value="1"/>
</dbReference>
<dbReference type="PANTHER" id="PTHR32338:SF10">
    <property type="entry name" value="N-ACETYL-GAMMA-GLUTAMYL-PHOSPHATE REDUCTASE, CHLOROPLASTIC-RELATED"/>
    <property type="match status" value="1"/>
</dbReference>
<dbReference type="PANTHER" id="PTHR32338">
    <property type="entry name" value="N-ACETYL-GAMMA-GLUTAMYL-PHOSPHATE REDUCTASE, CHLOROPLASTIC-RELATED-RELATED"/>
    <property type="match status" value="1"/>
</dbReference>
<dbReference type="Pfam" id="PF01118">
    <property type="entry name" value="Semialdhyde_dh"/>
    <property type="match status" value="1"/>
</dbReference>
<dbReference type="Pfam" id="PF22698">
    <property type="entry name" value="Semialdhyde_dhC_1"/>
    <property type="match status" value="1"/>
</dbReference>
<dbReference type="SMART" id="SM00859">
    <property type="entry name" value="Semialdhyde_dh"/>
    <property type="match status" value="1"/>
</dbReference>
<dbReference type="SUPFAM" id="SSF55347">
    <property type="entry name" value="Glyceraldehyde-3-phosphate dehydrogenase-like, C-terminal domain"/>
    <property type="match status" value="1"/>
</dbReference>
<dbReference type="SUPFAM" id="SSF51735">
    <property type="entry name" value="NAD(P)-binding Rossmann-fold domains"/>
    <property type="match status" value="1"/>
</dbReference>
<dbReference type="PROSITE" id="PS01224">
    <property type="entry name" value="ARGC"/>
    <property type="match status" value="1"/>
</dbReference>
<keyword id="KW-0028">Amino-acid biosynthesis</keyword>
<keyword id="KW-0055">Arginine biosynthesis</keyword>
<keyword id="KW-0963">Cytoplasm</keyword>
<keyword id="KW-0521">NADP</keyword>
<keyword id="KW-0560">Oxidoreductase</keyword>
<proteinExistence type="inferred from homology"/>
<reference key="1">
    <citation type="journal article" date="2008" name="Biol. Direct">
        <title>Complete genome sequence of the extremely acidophilic methanotroph isolate V4, Methylacidiphilum infernorum, a representative of the bacterial phylum Verrucomicrobia.</title>
        <authorList>
            <person name="Hou S."/>
            <person name="Makarova K.S."/>
            <person name="Saw J.H."/>
            <person name="Senin P."/>
            <person name="Ly B.V."/>
            <person name="Zhou Z."/>
            <person name="Ren Y."/>
            <person name="Wang J."/>
            <person name="Galperin M.Y."/>
            <person name="Omelchenko M.V."/>
            <person name="Wolf Y.I."/>
            <person name="Yutin N."/>
            <person name="Koonin E.V."/>
            <person name="Stott M.B."/>
            <person name="Mountain B.W."/>
            <person name="Crowe M.A."/>
            <person name="Smirnova A.V."/>
            <person name="Dunfield P.F."/>
            <person name="Feng L."/>
            <person name="Wang L."/>
            <person name="Alam M."/>
        </authorList>
    </citation>
    <scope>NUCLEOTIDE SEQUENCE [LARGE SCALE GENOMIC DNA]</scope>
    <source>
        <strain>Isolate V4</strain>
    </source>
</reference>
<protein>
    <recommendedName>
        <fullName evidence="1">N-acetyl-gamma-glutamyl-phosphate reductase</fullName>
        <shortName evidence="1">AGPR</shortName>
        <ecNumber evidence="1">1.2.1.38</ecNumber>
    </recommendedName>
    <alternativeName>
        <fullName evidence="1">N-acetyl-glutamate semialdehyde dehydrogenase</fullName>
        <shortName evidence="1">NAGSA dehydrogenase</shortName>
    </alternativeName>
</protein>
<organism>
    <name type="scientific">Methylacidiphilum infernorum (isolate V4)</name>
    <name type="common">Methylokorus infernorum (strain V4)</name>
    <dbReference type="NCBI Taxonomy" id="481448"/>
    <lineage>
        <taxon>Bacteria</taxon>
        <taxon>Pseudomonadati</taxon>
        <taxon>Verrucomicrobiota</taxon>
        <taxon>Methylacidiphilae</taxon>
        <taxon>Methylacidiphilales</taxon>
        <taxon>Methylacidiphilaceae</taxon>
        <taxon>Methylacidiphilum (ex Ratnadevi et al. 2023)</taxon>
    </lineage>
</organism>
<feature type="chain" id="PRO_1000123245" description="N-acetyl-gamma-glutamyl-phosphate reductase">
    <location>
        <begin position="1"/>
        <end position="345"/>
    </location>
</feature>
<feature type="active site" evidence="1">
    <location>
        <position position="153"/>
    </location>
</feature>
<sequence>MSSIRVGIVGASGYSGEELIRLLVRHPGVDLRWITSRQYKDRTLQSVYPGIGRFGELEFDDLESLEKKENQLELVFLALPHGAGMDYAHFFYNRGKVVIDLSADFRLENPLDYELYYKLSHPHADLLKKAVYALPEIYPDQIAHSNLLAMPGCYPTAVLLSLAPFLKKGWIDPHSIEIVALSGSTGAGKTLDTKLLFSELADNLRPYSFPSHRHIPEMEQQIAKLVKTDSVKVIFLPILAPLRRGILLTVIGSLSQPISQAEAEEQAQEFYKEAPFVKILPGGIMPELRYVLYSNNLYFSIHVLEEKKKLLILAAIDNLGKGAAGQAIQVMNIRLGWAQTLGLIP</sequence>